<evidence type="ECO:0000305" key="1"/>
<accession>Q8XZG9</accession>
<name>Y1426_RALN1</name>
<keyword id="KW-1185">Reference proteome</keyword>
<comment type="similarity">
    <text evidence="1">Belongs to the UPF0125 (RnfH) family.</text>
</comment>
<sequence>MANPERIDVMVCLATVTPPKLVQVQVSATATVADAVRASGLLEEVGLSIDACRLGVYGKRKAPDALLHAHDRVEITGPLIADPKAARRRRVRRVRATGTREGLKWLRNEAPPEDDVAG</sequence>
<organism>
    <name type="scientific">Ralstonia nicotianae (strain ATCC BAA-1114 / GMI1000)</name>
    <name type="common">Ralstonia solanacearum</name>
    <dbReference type="NCBI Taxonomy" id="267608"/>
    <lineage>
        <taxon>Bacteria</taxon>
        <taxon>Pseudomonadati</taxon>
        <taxon>Pseudomonadota</taxon>
        <taxon>Betaproteobacteria</taxon>
        <taxon>Burkholderiales</taxon>
        <taxon>Burkholderiaceae</taxon>
        <taxon>Ralstonia</taxon>
        <taxon>Ralstonia solanacearum species complex</taxon>
    </lineage>
</organism>
<feature type="chain" id="PRO_0000192498" description="UPF0125 protein RSc1426">
    <location>
        <begin position="1"/>
        <end position="118"/>
    </location>
</feature>
<reference key="1">
    <citation type="journal article" date="2002" name="Nature">
        <title>Genome sequence of the plant pathogen Ralstonia solanacearum.</title>
        <authorList>
            <person name="Salanoubat M."/>
            <person name="Genin S."/>
            <person name="Artiguenave F."/>
            <person name="Gouzy J."/>
            <person name="Mangenot S."/>
            <person name="Arlat M."/>
            <person name="Billault A."/>
            <person name="Brottier P."/>
            <person name="Camus J.-C."/>
            <person name="Cattolico L."/>
            <person name="Chandler M."/>
            <person name="Choisne N."/>
            <person name="Claudel-Renard C."/>
            <person name="Cunnac S."/>
            <person name="Demange N."/>
            <person name="Gaspin C."/>
            <person name="Lavie M."/>
            <person name="Moisan A."/>
            <person name="Robert C."/>
            <person name="Saurin W."/>
            <person name="Schiex T."/>
            <person name="Siguier P."/>
            <person name="Thebault P."/>
            <person name="Whalen M."/>
            <person name="Wincker P."/>
            <person name="Levy M."/>
            <person name="Weissenbach J."/>
            <person name="Boucher C.A."/>
        </authorList>
    </citation>
    <scope>NUCLEOTIDE SEQUENCE [LARGE SCALE GENOMIC DNA]</scope>
    <source>
        <strain>ATCC BAA-1114 / GMI1000</strain>
    </source>
</reference>
<protein>
    <recommendedName>
        <fullName>UPF0125 protein RSc1426</fullName>
    </recommendedName>
</protein>
<gene>
    <name type="ordered locus">RSc1426</name>
    <name type="ORF">RS05266</name>
</gene>
<proteinExistence type="inferred from homology"/>
<dbReference type="EMBL" id="AL646052">
    <property type="protein sequence ID" value="CAD15128.1"/>
    <property type="molecule type" value="Genomic_DNA"/>
</dbReference>
<dbReference type="RefSeq" id="WP_011001375.1">
    <property type="nucleotide sequence ID" value="NC_003295.1"/>
</dbReference>
<dbReference type="SMR" id="Q8XZG9"/>
<dbReference type="STRING" id="267608.RSc1426"/>
<dbReference type="EnsemblBacteria" id="CAD15128">
    <property type="protein sequence ID" value="CAD15128"/>
    <property type="gene ID" value="RSc1426"/>
</dbReference>
<dbReference type="KEGG" id="rso:RSc1426"/>
<dbReference type="eggNOG" id="COG2914">
    <property type="taxonomic scope" value="Bacteria"/>
</dbReference>
<dbReference type="HOGENOM" id="CLU_150721_0_0_4"/>
<dbReference type="Proteomes" id="UP000001436">
    <property type="component" value="Chromosome"/>
</dbReference>
<dbReference type="Gene3D" id="3.10.20.280">
    <property type="entry name" value="RnfH-like"/>
    <property type="match status" value="1"/>
</dbReference>
<dbReference type="HAMAP" id="MF_00460">
    <property type="entry name" value="UPF0125_RnfH"/>
    <property type="match status" value="1"/>
</dbReference>
<dbReference type="InterPro" id="IPR016155">
    <property type="entry name" value="Mopterin_synth/thiamin_S_b"/>
</dbReference>
<dbReference type="InterPro" id="IPR005346">
    <property type="entry name" value="RnfH"/>
</dbReference>
<dbReference type="InterPro" id="IPR037021">
    <property type="entry name" value="RnfH_sf"/>
</dbReference>
<dbReference type="PANTHER" id="PTHR37483">
    <property type="entry name" value="UPF0125 PROTEIN RATB"/>
    <property type="match status" value="1"/>
</dbReference>
<dbReference type="PANTHER" id="PTHR37483:SF1">
    <property type="entry name" value="UPF0125 PROTEIN RATB"/>
    <property type="match status" value="1"/>
</dbReference>
<dbReference type="Pfam" id="PF03658">
    <property type="entry name" value="Ub-RnfH"/>
    <property type="match status" value="1"/>
</dbReference>
<dbReference type="SUPFAM" id="SSF54285">
    <property type="entry name" value="MoaD/ThiS"/>
    <property type="match status" value="1"/>
</dbReference>